<proteinExistence type="evidence at protein level"/>
<feature type="signal peptide" evidence="2">
    <location>
        <begin position="1"/>
        <end position="21"/>
    </location>
</feature>
<feature type="chain" id="PRO_0000035436" description="Short neurotoxin B" evidence="2">
    <location>
        <begin position="22"/>
        <end position="83"/>
    </location>
</feature>
<feature type="disulfide bond" evidence="1">
    <location>
        <begin position="24"/>
        <end position="45"/>
    </location>
</feature>
<feature type="disulfide bond" evidence="1">
    <location>
        <begin position="38"/>
        <end position="62"/>
    </location>
</feature>
<feature type="disulfide bond" evidence="1">
    <location>
        <begin position="64"/>
        <end position="75"/>
    </location>
</feature>
<feature type="disulfide bond" evidence="1">
    <location>
        <begin position="76"/>
        <end position="81"/>
    </location>
</feature>
<sequence>MKTLLLTLVVVTIVCLDLGYTRRCFNHPSSQPQTNKSCPPGENSCYNKQWRDHRGTITERGCGCPQVKSGIKLTCCQSDDCNN</sequence>
<comment type="function">
    <text>Binds to muscle nicotinic acetylcholine receptor (nAChR) and inhibit acetylcholine from binding to the receptor, thereby impairing neuromuscular transmission.</text>
</comment>
<comment type="subcellular location">
    <subcellularLocation>
        <location evidence="3">Secreted</location>
    </subcellularLocation>
</comment>
<comment type="tissue specificity">
    <text evidence="4">Expressed by the venom gland.</text>
</comment>
<comment type="similarity">
    <text evidence="4">Belongs to the three-finger toxin family. Short-chain subfamily. Type I alpha-neurotoxin sub-subfamily.</text>
</comment>
<accession>P10459</accession>
<accession>Q9PRJ3</accession>
<reference key="1">
    <citation type="submission" date="1998-09" db="EMBL/GenBank/DDBJ databases">
        <title>Classification of sea snakes in genus Laticauda by nucleotide sequences encoding short chain neurotoxins.</title>
        <authorList>
            <person name="Kariya Y."/>
            <person name="Araki S."/>
            <person name="Agu H."/>
            <person name="Tamiya T."/>
            <person name="Tsuchiya T."/>
        </authorList>
    </citation>
    <scope>NUCLEOTIDE SEQUENCE [MRNA]</scope>
    <source>
        <tissue>Venom gland</tissue>
    </source>
</reference>
<reference key="2">
    <citation type="journal article" date="1986" name="Biochemistry">
        <title>Stopped-flow fluorescence studies on binding kinetics of neurotoxins with acetylcholine receptor.</title>
        <authorList>
            <person name="Endo T."/>
            <person name="Nakanishi M."/>
            <person name="Furukawa S."/>
            <person name="Joubert F.J."/>
            <person name="Tamiya N."/>
            <person name="Hayashi K."/>
        </authorList>
    </citation>
    <scope>PROTEIN SEQUENCE OF 22-83</scope>
    <scope>SUBCELLULAR LOCATION</scope>
    <source>
        <tissue>Venom</tissue>
    </source>
</reference>
<name>3S1B_LATLA</name>
<evidence type="ECO:0000250" key="1">
    <source>
        <dbReference type="UniProtKB" id="P0C1Z0"/>
    </source>
</evidence>
<evidence type="ECO:0000269" key="2">
    <source>
    </source>
</evidence>
<evidence type="ECO:0000269" key="3">
    <source ref="1"/>
</evidence>
<evidence type="ECO:0000305" key="4"/>
<keyword id="KW-0008">Acetylcholine receptor inhibiting toxin</keyword>
<keyword id="KW-0903">Direct protein sequencing</keyword>
<keyword id="KW-1015">Disulfide bond</keyword>
<keyword id="KW-0872">Ion channel impairing toxin</keyword>
<keyword id="KW-0528">Neurotoxin</keyword>
<keyword id="KW-0629">Postsynaptic neurotoxin</keyword>
<keyword id="KW-1185">Reference proteome</keyword>
<keyword id="KW-0964">Secreted</keyword>
<keyword id="KW-0732">Signal</keyword>
<keyword id="KW-0800">Toxin</keyword>
<dbReference type="EMBL" id="AB017956">
    <property type="protein sequence ID" value="BAA75776.1"/>
    <property type="molecule type" value="mRNA"/>
</dbReference>
<dbReference type="EMBL" id="AB017959">
    <property type="protein sequence ID" value="BAA75779.1"/>
    <property type="molecule type" value="mRNA"/>
</dbReference>
<dbReference type="EMBL" id="AB017961">
    <property type="protein sequence ID" value="BAA75781.1"/>
    <property type="molecule type" value="mRNA"/>
</dbReference>
<dbReference type="EMBL" id="AB017963">
    <property type="protein sequence ID" value="BAA75783.1"/>
    <property type="molecule type" value="mRNA"/>
</dbReference>
<dbReference type="PIR" id="G25866">
    <property type="entry name" value="G25866"/>
</dbReference>
<dbReference type="SMR" id="P10459"/>
<dbReference type="Proteomes" id="UP000694406">
    <property type="component" value="Unplaced"/>
</dbReference>
<dbReference type="GO" id="GO:0005576">
    <property type="term" value="C:extracellular region"/>
    <property type="evidence" value="ECO:0007669"/>
    <property type="project" value="UniProtKB-SubCell"/>
</dbReference>
<dbReference type="GO" id="GO:0030550">
    <property type="term" value="F:acetylcholine receptor inhibitor activity"/>
    <property type="evidence" value="ECO:0007669"/>
    <property type="project" value="UniProtKB-KW"/>
</dbReference>
<dbReference type="GO" id="GO:0099106">
    <property type="term" value="F:ion channel regulator activity"/>
    <property type="evidence" value="ECO:0007669"/>
    <property type="project" value="UniProtKB-KW"/>
</dbReference>
<dbReference type="GO" id="GO:0090729">
    <property type="term" value="F:toxin activity"/>
    <property type="evidence" value="ECO:0007669"/>
    <property type="project" value="UniProtKB-KW"/>
</dbReference>
<dbReference type="CDD" id="cd00206">
    <property type="entry name" value="TFP_snake_toxin"/>
    <property type="match status" value="1"/>
</dbReference>
<dbReference type="FunFam" id="2.10.60.10:FF:000024">
    <property type="entry name" value="Cytotoxin 1"/>
    <property type="match status" value="1"/>
</dbReference>
<dbReference type="Gene3D" id="2.10.60.10">
    <property type="entry name" value="CD59"/>
    <property type="match status" value="1"/>
</dbReference>
<dbReference type="InterPro" id="IPR003571">
    <property type="entry name" value="Snake_3FTx"/>
</dbReference>
<dbReference type="InterPro" id="IPR045860">
    <property type="entry name" value="Snake_toxin-like_sf"/>
</dbReference>
<dbReference type="InterPro" id="IPR018354">
    <property type="entry name" value="Snake_toxin_con_site"/>
</dbReference>
<dbReference type="InterPro" id="IPR054131">
    <property type="entry name" value="Toxin_cobra-type"/>
</dbReference>
<dbReference type="Pfam" id="PF21947">
    <property type="entry name" value="Toxin_cobra-type"/>
    <property type="match status" value="1"/>
</dbReference>
<dbReference type="SUPFAM" id="SSF57302">
    <property type="entry name" value="Snake toxin-like"/>
    <property type="match status" value="1"/>
</dbReference>
<dbReference type="PROSITE" id="PS00272">
    <property type="entry name" value="SNAKE_TOXIN"/>
    <property type="match status" value="1"/>
</dbReference>
<organism>
    <name type="scientific">Laticauda laticaudata</name>
    <name type="common">Blue-ringed sea krait</name>
    <name type="synonym">Blue-lipped sea krait</name>
    <dbReference type="NCBI Taxonomy" id="8630"/>
    <lineage>
        <taxon>Eukaryota</taxon>
        <taxon>Metazoa</taxon>
        <taxon>Chordata</taxon>
        <taxon>Craniata</taxon>
        <taxon>Vertebrata</taxon>
        <taxon>Euteleostomi</taxon>
        <taxon>Lepidosauria</taxon>
        <taxon>Squamata</taxon>
        <taxon>Bifurcata</taxon>
        <taxon>Unidentata</taxon>
        <taxon>Episquamata</taxon>
        <taxon>Toxicofera</taxon>
        <taxon>Serpentes</taxon>
        <taxon>Colubroidea</taxon>
        <taxon>Elapidae</taxon>
        <taxon>Laticaudinae</taxon>
        <taxon>Laticauda</taxon>
    </lineage>
</organism>
<protein>
    <recommendedName>
        <fullName>Short neurotoxin B</fullName>
    </recommendedName>
</protein>